<sequence length="378" mass="43810">MDLIGLLKSQFLCHLVFCYVFIASGLIVNAIQLCTLVIWPINKQLFRKINARLCYCVSSQLVMLLEWWSGTECTIYTDPKACPHYGKENAIVVLNHKFEIDFLCGWSLAERLGILGNSKVLAKKELAYVPIIGWMWYFVEMIFCTRKWEQDRQTVAKSLLHLRDYPEKYLFLIHCEGTRFTEKKHQISMQVAQAKGLPSLKHHLLPRTKGFAITVKCLRDVVPAVYDCTLNFRNNENPTLLGVLNGKKYHADCYVRRIPMEDIPEDEDKCSAWLHKLYQEKDAFQEEYYRTGVFPETPWVPPRRPWSLVNWLFWASLLLYPFFQFLVSMVSSGSSVTLASLVLIFCMASMGVRWMIGVTEIDKGSAYGNIDNKRKQTD</sequence>
<gene>
    <name type="primary">Agpat4</name>
</gene>
<keyword id="KW-0012">Acyltransferase</keyword>
<keyword id="KW-0256">Endoplasmic reticulum</keyword>
<keyword id="KW-0444">Lipid biosynthesis</keyword>
<keyword id="KW-0443">Lipid metabolism</keyword>
<keyword id="KW-0472">Membrane</keyword>
<keyword id="KW-0594">Phospholipid biosynthesis</keyword>
<keyword id="KW-1208">Phospholipid metabolism</keyword>
<keyword id="KW-1185">Reference proteome</keyword>
<keyword id="KW-0808">Transferase</keyword>
<keyword id="KW-0812">Transmembrane</keyword>
<keyword id="KW-1133">Transmembrane helix</keyword>
<reference key="1">
    <citation type="journal article" date="2005" name="Science">
        <title>The transcriptional landscape of the mammalian genome.</title>
        <authorList>
            <person name="Carninci P."/>
            <person name="Kasukawa T."/>
            <person name="Katayama S."/>
            <person name="Gough J."/>
            <person name="Frith M.C."/>
            <person name="Maeda N."/>
            <person name="Oyama R."/>
            <person name="Ravasi T."/>
            <person name="Lenhard B."/>
            <person name="Wells C."/>
            <person name="Kodzius R."/>
            <person name="Shimokawa K."/>
            <person name="Bajic V.B."/>
            <person name="Brenner S.E."/>
            <person name="Batalov S."/>
            <person name="Forrest A.R."/>
            <person name="Zavolan M."/>
            <person name="Davis M.J."/>
            <person name="Wilming L.G."/>
            <person name="Aidinis V."/>
            <person name="Allen J.E."/>
            <person name="Ambesi-Impiombato A."/>
            <person name="Apweiler R."/>
            <person name="Aturaliya R.N."/>
            <person name="Bailey T.L."/>
            <person name="Bansal M."/>
            <person name="Baxter L."/>
            <person name="Beisel K.W."/>
            <person name="Bersano T."/>
            <person name="Bono H."/>
            <person name="Chalk A.M."/>
            <person name="Chiu K.P."/>
            <person name="Choudhary V."/>
            <person name="Christoffels A."/>
            <person name="Clutterbuck D.R."/>
            <person name="Crowe M.L."/>
            <person name="Dalla E."/>
            <person name="Dalrymple B.P."/>
            <person name="de Bono B."/>
            <person name="Della Gatta G."/>
            <person name="di Bernardo D."/>
            <person name="Down T."/>
            <person name="Engstrom P."/>
            <person name="Fagiolini M."/>
            <person name="Faulkner G."/>
            <person name="Fletcher C.F."/>
            <person name="Fukushima T."/>
            <person name="Furuno M."/>
            <person name="Futaki S."/>
            <person name="Gariboldi M."/>
            <person name="Georgii-Hemming P."/>
            <person name="Gingeras T.R."/>
            <person name="Gojobori T."/>
            <person name="Green R.E."/>
            <person name="Gustincich S."/>
            <person name="Harbers M."/>
            <person name="Hayashi Y."/>
            <person name="Hensch T.K."/>
            <person name="Hirokawa N."/>
            <person name="Hill D."/>
            <person name="Huminiecki L."/>
            <person name="Iacono M."/>
            <person name="Ikeo K."/>
            <person name="Iwama A."/>
            <person name="Ishikawa T."/>
            <person name="Jakt M."/>
            <person name="Kanapin A."/>
            <person name="Katoh M."/>
            <person name="Kawasawa Y."/>
            <person name="Kelso J."/>
            <person name="Kitamura H."/>
            <person name="Kitano H."/>
            <person name="Kollias G."/>
            <person name="Krishnan S.P."/>
            <person name="Kruger A."/>
            <person name="Kummerfeld S.K."/>
            <person name="Kurochkin I.V."/>
            <person name="Lareau L.F."/>
            <person name="Lazarevic D."/>
            <person name="Lipovich L."/>
            <person name="Liu J."/>
            <person name="Liuni S."/>
            <person name="McWilliam S."/>
            <person name="Madan Babu M."/>
            <person name="Madera M."/>
            <person name="Marchionni L."/>
            <person name="Matsuda H."/>
            <person name="Matsuzawa S."/>
            <person name="Miki H."/>
            <person name="Mignone F."/>
            <person name="Miyake S."/>
            <person name="Morris K."/>
            <person name="Mottagui-Tabar S."/>
            <person name="Mulder N."/>
            <person name="Nakano N."/>
            <person name="Nakauchi H."/>
            <person name="Ng P."/>
            <person name="Nilsson R."/>
            <person name="Nishiguchi S."/>
            <person name="Nishikawa S."/>
            <person name="Nori F."/>
            <person name="Ohara O."/>
            <person name="Okazaki Y."/>
            <person name="Orlando V."/>
            <person name="Pang K.C."/>
            <person name="Pavan W.J."/>
            <person name="Pavesi G."/>
            <person name="Pesole G."/>
            <person name="Petrovsky N."/>
            <person name="Piazza S."/>
            <person name="Reed J."/>
            <person name="Reid J.F."/>
            <person name="Ring B.Z."/>
            <person name="Ringwald M."/>
            <person name="Rost B."/>
            <person name="Ruan Y."/>
            <person name="Salzberg S.L."/>
            <person name="Sandelin A."/>
            <person name="Schneider C."/>
            <person name="Schoenbach C."/>
            <person name="Sekiguchi K."/>
            <person name="Semple C.A."/>
            <person name="Seno S."/>
            <person name="Sessa L."/>
            <person name="Sheng Y."/>
            <person name="Shibata Y."/>
            <person name="Shimada H."/>
            <person name="Shimada K."/>
            <person name="Silva D."/>
            <person name="Sinclair B."/>
            <person name="Sperling S."/>
            <person name="Stupka E."/>
            <person name="Sugiura K."/>
            <person name="Sultana R."/>
            <person name="Takenaka Y."/>
            <person name="Taki K."/>
            <person name="Tammoja K."/>
            <person name="Tan S.L."/>
            <person name="Tang S."/>
            <person name="Taylor M.S."/>
            <person name="Tegner J."/>
            <person name="Teichmann S.A."/>
            <person name="Ueda H.R."/>
            <person name="van Nimwegen E."/>
            <person name="Verardo R."/>
            <person name="Wei C.L."/>
            <person name="Yagi K."/>
            <person name="Yamanishi H."/>
            <person name="Zabarovsky E."/>
            <person name="Zhu S."/>
            <person name="Zimmer A."/>
            <person name="Hide W."/>
            <person name="Bult C."/>
            <person name="Grimmond S.M."/>
            <person name="Teasdale R.D."/>
            <person name="Liu E.T."/>
            <person name="Brusic V."/>
            <person name="Quackenbush J."/>
            <person name="Wahlestedt C."/>
            <person name="Mattick J.S."/>
            <person name="Hume D.A."/>
            <person name="Kai C."/>
            <person name="Sasaki D."/>
            <person name="Tomaru Y."/>
            <person name="Fukuda S."/>
            <person name="Kanamori-Katayama M."/>
            <person name="Suzuki M."/>
            <person name="Aoki J."/>
            <person name="Arakawa T."/>
            <person name="Iida J."/>
            <person name="Imamura K."/>
            <person name="Itoh M."/>
            <person name="Kato T."/>
            <person name="Kawaji H."/>
            <person name="Kawagashira N."/>
            <person name="Kawashima T."/>
            <person name="Kojima M."/>
            <person name="Kondo S."/>
            <person name="Konno H."/>
            <person name="Nakano K."/>
            <person name="Ninomiya N."/>
            <person name="Nishio T."/>
            <person name="Okada M."/>
            <person name="Plessy C."/>
            <person name="Shibata K."/>
            <person name="Shiraki T."/>
            <person name="Suzuki S."/>
            <person name="Tagami M."/>
            <person name="Waki K."/>
            <person name="Watahiki A."/>
            <person name="Okamura-Oho Y."/>
            <person name="Suzuki H."/>
            <person name="Kawai J."/>
            <person name="Hayashizaki Y."/>
        </authorList>
    </citation>
    <scope>NUCLEOTIDE SEQUENCE [LARGE SCALE MRNA]</scope>
    <source>
        <strain>C57BL/6J</strain>
        <tissue>Cerebellum</tissue>
    </source>
</reference>
<reference key="2">
    <citation type="submission" date="2002-02" db="EMBL/GenBank/DDBJ databases">
        <title>Genomic sequence analysis in the mouse T-complex region.</title>
        <authorList>
            <person name="Brathwaite M.E."/>
            <person name="Waeltz P."/>
            <person name="Qian Y."/>
            <person name="Dudekula D."/>
            <person name="Schlessinger D."/>
            <person name="Nagaraja R."/>
        </authorList>
    </citation>
    <scope>NUCLEOTIDE SEQUENCE [LARGE SCALE GENOMIC DNA]</scope>
    <source>
        <strain>C57BL/6J</strain>
    </source>
</reference>
<reference key="3">
    <citation type="journal article" date="2004" name="Genome Res.">
        <title>The status, quality, and expansion of the NIH full-length cDNA project: the Mammalian Gene Collection (MGC).</title>
        <authorList>
            <consortium name="The MGC Project Team"/>
        </authorList>
    </citation>
    <scope>NUCLEOTIDE SEQUENCE [LARGE SCALE MRNA]</scope>
    <source>
        <strain>FVB/N</strain>
        <tissue>Colon</tissue>
    </source>
</reference>
<reference key="4">
    <citation type="journal article" date="2005" name="Biochem. J.">
        <title>Cloning and characterization of murine 1-acyl-sn-glycerol 3-phosphate acyltransferases and their regulation by PPARalpha in murine heart.</title>
        <authorList>
            <person name="Lu B."/>
            <person name="Jiang Y.J."/>
            <person name="Zhou Y."/>
            <person name="Xu F.Y."/>
            <person name="Hatch G.M."/>
            <person name="Choy P.C."/>
        </authorList>
    </citation>
    <scope>FUNCTION</scope>
    <scope>CATALYTIC ACTIVITY</scope>
    <scope>TISSUE SPECIFICITY</scope>
    <source>
        <strain>C57BL/6J</strain>
    </source>
</reference>
<reference key="5">
    <citation type="journal article" date="2010" name="Cell">
        <title>A tissue-specific atlas of mouse protein phosphorylation and expression.</title>
        <authorList>
            <person name="Huttlin E.L."/>
            <person name="Jedrychowski M.P."/>
            <person name="Elias J.E."/>
            <person name="Goswami T."/>
            <person name="Rad R."/>
            <person name="Beausoleil S.A."/>
            <person name="Villen J."/>
            <person name="Haas W."/>
            <person name="Sowa M.E."/>
            <person name="Gygi S.P."/>
        </authorList>
    </citation>
    <scope>IDENTIFICATION BY MASS SPECTROMETRY [LARGE SCALE ANALYSIS]</scope>
    <source>
        <tissue>Lung</tissue>
        <tissue>Testis</tissue>
    </source>
</reference>
<reference key="6">
    <citation type="journal article" date="2014" name="Biochem. Biophys. Res. Commun.">
        <title>A novel lysophosphatidic acid acyltransferase enzyme (LPAAT4) with a possible role for incorporating docosahexaenoic acid into brain glycerophospholipids.</title>
        <authorList>
            <person name="Eto M."/>
            <person name="Shindou H."/>
            <person name="Shimizu T."/>
        </authorList>
    </citation>
    <scope>FUNCTION</scope>
    <scope>CATALYTIC ACTIVITY</scope>
    <scope>BIOPHYSICOCHEMICAL PROPERTIES</scope>
    <scope>SUBCELLULAR LOCATION</scope>
    <scope>TISSUE SPECIFICITY</scope>
</reference>
<organism>
    <name type="scientific">Mus musculus</name>
    <name type="common">Mouse</name>
    <dbReference type="NCBI Taxonomy" id="10090"/>
    <lineage>
        <taxon>Eukaryota</taxon>
        <taxon>Metazoa</taxon>
        <taxon>Chordata</taxon>
        <taxon>Craniata</taxon>
        <taxon>Vertebrata</taxon>
        <taxon>Euteleostomi</taxon>
        <taxon>Mammalia</taxon>
        <taxon>Eutheria</taxon>
        <taxon>Euarchontoglires</taxon>
        <taxon>Glires</taxon>
        <taxon>Rodentia</taxon>
        <taxon>Myomorpha</taxon>
        <taxon>Muroidea</taxon>
        <taxon>Muridae</taxon>
        <taxon>Murinae</taxon>
        <taxon>Mus</taxon>
        <taxon>Mus</taxon>
    </lineage>
</organism>
<feature type="chain" id="PRO_0000208198" description="1-acyl-sn-glycerol-3-phosphate acyltransferase delta">
    <location>
        <begin position="1"/>
        <end position="378"/>
    </location>
</feature>
<feature type="transmembrane region" description="Helical" evidence="2">
    <location>
        <begin position="11"/>
        <end position="31"/>
    </location>
</feature>
<feature type="transmembrane region" description="Helical" evidence="2">
    <location>
        <begin position="125"/>
        <end position="145"/>
    </location>
</feature>
<feature type="transmembrane region" description="Helical" evidence="2">
    <location>
        <begin position="311"/>
        <end position="331"/>
    </location>
</feature>
<feature type="transmembrane region" description="Helical" evidence="2">
    <location>
        <begin position="338"/>
        <end position="358"/>
    </location>
</feature>
<feature type="short sequence motif" description="HXXXXD motif" evidence="1">
    <location>
        <begin position="96"/>
        <end position="101"/>
    </location>
</feature>
<evidence type="ECO:0000250" key="1">
    <source>
        <dbReference type="UniProtKB" id="Q9D517"/>
    </source>
</evidence>
<evidence type="ECO:0000255" key="2"/>
<evidence type="ECO:0000269" key="3">
    <source>
    </source>
</evidence>
<evidence type="ECO:0000269" key="4">
    <source>
    </source>
</evidence>
<evidence type="ECO:0000305" key="5"/>
<evidence type="ECO:0000305" key="6">
    <source>
    </source>
</evidence>
<evidence type="ECO:0000305" key="7">
    <source>
    </source>
</evidence>
<proteinExistence type="evidence at protein level"/>
<comment type="function">
    <text evidence="3 4">Converts 1-acyl-sn-glycerol-3-phosphate (lysophosphatidic acid or LPA) into 1,2-diacyl-sn-glycerol-3-phosphate (phosphatidic acid or PA) by incorporating an acyl moiety at the sn-2 position of the glycerol backbone (PubMed:15367102). Exhibits high acyl-CoA specificity for polyunsaturated fatty acyl-CoA, especially docosahexaenoyl-CoA (22:6-CoA, DHA-CoA) (PubMed:24333445).</text>
</comment>
<comment type="catalytic activity">
    <reaction evidence="3 4">
        <text>a 1-acyl-sn-glycero-3-phosphate + an acyl-CoA = a 1,2-diacyl-sn-glycero-3-phosphate + CoA</text>
        <dbReference type="Rhea" id="RHEA:19709"/>
        <dbReference type="ChEBI" id="CHEBI:57287"/>
        <dbReference type="ChEBI" id="CHEBI:57970"/>
        <dbReference type="ChEBI" id="CHEBI:58342"/>
        <dbReference type="ChEBI" id="CHEBI:58608"/>
        <dbReference type="EC" id="2.3.1.51"/>
    </reaction>
    <physiologicalReaction direction="left-to-right" evidence="6 7">
        <dbReference type="Rhea" id="RHEA:19710"/>
    </physiologicalReaction>
</comment>
<comment type="catalytic activity">
    <reaction evidence="4">
        <text>(4Z,7Z,10Z,13Z,16Z,19Z)-docosahexaenoyl-CoA + 1-hexadecanoyl-sn-glycero-3-phosphate = 1-hexadecanoyl-2-(4Z,7Z,10Z,13Z,16Z,19Z-docosahexaenoyl)-sn-glycero-3-phosphate + CoA</text>
        <dbReference type="Rhea" id="RHEA:55300"/>
        <dbReference type="ChEBI" id="CHEBI:57287"/>
        <dbReference type="ChEBI" id="CHEBI:57518"/>
        <dbReference type="ChEBI" id="CHEBI:74298"/>
        <dbReference type="ChEBI" id="CHEBI:82928"/>
    </reaction>
    <physiologicalReaction direction="left-to-right" evidence="7">
        <dbReference type="Rhea" id="RHEA:55301"/>
    </physiologicalReaction>
</comment>
<comment type="catalytic activity">
    <reaction evidence="4">
        <text>1-octadecanoyl-sn-glycero-3-phosphate + (9Z,12Z)-octadecadienoyl-CoA = 1-octadecanoyl-2-(9Z,12Z-octadecadienoyl)-sn-glycero-3-phosphate + CoA</text>
        <dbReference type="Rhea" id="RHEA:55304"/>
        <dbReference type="ChEBI" id="CHEBI:57287"/>
        <dbReference type="ChEBI" id="CHEBI:57383"/>
        <dbReference type="ChEBI" id="CHEBI:74565"/>
        <dbReference type="ChEBI" id="CHEBI:77098"/>
    </reaction>
    <physiologicalReaction direction="left-to-right" evidence="7">
        <dbReference type="Rhea" id="RHEA:55305"/>
    </physiologicalReaction>
</comment>
<comment type="catalytic activity">
    <reaction evidence="4">
        <text>1-octadecanoyl-sn-glycero-3-phosphate + (4Z,7Z,10Z,13Z,16Z,19Z)-docosahexaenoyl-CoA = 1-octadecanoyl-2-(4Z,7Z,10Z,13Z,16Z,19Z-docosahexaenoyl)-sn-glycero-3-phosphate + CoA</text>
        <dbReference type="Rhea" id="RHEA:55308"/>
        <dbReference type="ChEBI" id="CHEBI:57287"/>
        <dbReference type="ChEBI" id="CHEBI:74298"/>
        <dbReference type="ChEBI" id="CHEBI:74565"/>
        <dbReference type="ChEBI" id="CHEBI:77130"/>
    </reaction>
    <physiologicalReaction direction="left-to-right" evidence="7">
        <dbReference type="Rhea" id="RHEA:55309"/>
    </physiologicalReaction>
</comment>
<comment type="catalytic activity">
    <reaction evidence="4">
        <text>(4Z,7Z,10Z,13Z,16Z,19Z)-docosahexaenoyl-CoA + 1-(9Z-octadecenoyl)-sn-glycero-3-phosphate = 1-(9Z-octadecenoyl)-2-(4Z,7Z,10Z,13Z,16Z,19Z-docosahexaenoyl)-sn-glycero-3-phosphate + CoA</text>
        <dbReference type="Rhea" id="RHEA:55312"/>
        <dbReference type="ChEBI" id="CHEBI:57287"/>
        <dbReference type="ChEBI" id="CHEBI:74298"/>
        <dbReference type="ChEBI" id="CHEBI:74544"/>
        <dbReference type="ChEBI" id="CHEBI:138723"/>
    </reaction>
    <physiologicalReaction direction="left-to-right" evidence="7">
        <dbReference type="Rhea" id="RHEA:55313"/>
    </physiologicalReaction>
</comment>
<comment type="biophysicochemical properties">
    <kinetics>
        <KM evidence="4">79.3 uM for LPA C16:0</KM>
        <KM evidence="4">42.9 uM for LPA C18:0</KM>
        <KM evidence="4">6.3 uM for docosahexaenoyl-CoA</KM>
        <Vmax evidence="4">276.6 nmol/min/mg enzyme for LPA C16:0</Vmax>
        <Vmax evidence="4">23.2 nmol/min/mg enzyme for LPA C18:0</Vmax>
        <Vmax evidence="4">109.3 nmol/min/mg enzyme for docosahexaenoyl-CoA</Vmax>
    </kinetics>
</comment>
<comment type="pathway">
    <text>Phospholipid metabolism; CDP-diacylglycerol biosynthesis; CDP-diacylglycerol from sn-glycerol 3-phosphate: step 2/3.</text>
</comment>
<comment type="subcellular location">
    <subcellularLocation>
        <location evidence="4">Endoplasmic reticulum membrane</location>
        <topology evidence="2">Multi-pass membrane protein</topology>
    </subcellularLocation>
</comment>
<comment type="tissue specificity">
    <text evidence="3 4">Expressed at a high levels in the brain, at intermediate or low levels in skeletal muscles, gut, kidney, spleen and lung (PubMed:15367102, PubMed:24333445). Barely detectable in heart and liver (PubMed:15367102).</text>
</comment>
<comment type="domain">
    <text evidence="1">The HXXXXD motif is essential for acyltransferase activity and may constitute the binding site for the phosphate moiety of the glycerol-3-phosphate.</text>
</comment>
<comment type="similarity">
    <text evidence="5">Belongs to the 1-acyl-sn-glycerol-3-phosphate acyltransferase family.</text>
</comment>
<accession>Q8K4X7</accession>
<accession>Q3TKN0</accession>
<accession>Q9DB84</accession>
<protein>
    <recommendedName>
        <fullName>1-acyl-sn-glycerol-3-phosphate acyltransferase delta</fullName>
        <ecNumber evidence="3 4">2.3.1.51</ecNumber>
    </recommendedName>
    <alternativeName>
        <fullName>1-acylglycerol-3-phosphate O-acyltransferase 4</fullName>
        <shortName>1-AGP acyltransferase 4</shortName>
        <shortName>1-AGPAT 4</shortName>
    </alternativeName>
    <alternativeName>
        <fullName>Lysophosphatidic acid acyltransferase delta</fullName>
        <shortName>LPAAT-delta</shortName>
    </alternativeName>
</protein>
<dbReference type="EC" id="2.3.1.51" evidence="3 4"/>
<dbReference type="EMBL" id="AK005139">
    <property type="protein sequence ID" value="BAB23837.2"/>
    <property type="molecule type" value="mRNA"/>
</dbReference>
<dbReference type="EMBL" id="AK166917">
    <property type="protein sequence ID" value="BAE39115.1"/>
    <property type="molecule type" value="mRNA"/>
</dbReference>
<dbReference type="EMBL" id="AF485269">
    <property type="protein sequence ID" value="AAM33375.1"/>
    <property type="molecule type" value="Genomic_DNA"/>
</dbReference>
<dbReference type="EMBL" id="BC047281">
    <property type="protein sequence ID" value="AAH47281.1"/>
    <property type="molecule type" value="mRNA"/>
</dbReference>
<dbReference type="CCDS" id="CCDS28389.1"/>
<dbReference type="RefSeq" id="NP_080920.2">
    <property type="nucleotide sequence ID" value="NM_026644.2"/>
</dbReference>
<dbReference type="RefSeq" id="XP_006523408.2">
    <property type="nucleotide sequence ID" value="XM_006523345.2"/>
</dbReference>
<dbReference type="BioGRID" id="212767">
    <property type="interactions" value="2"/>
</dbReference>
<dbReference type="FunCoup" id="Q8K4X7">
    <property type="interactions" value="1422"/>
</dbReference>
<dbReference type="IntAct" id="Q8K4X7">
    <property type="interactions" value="1"/>
</dbReference>
<dbReference type="STRING" id="10090.ENSMUSP00000024594"/>
<dbReference type="SwissLipids" id="SLP:000001828"/>
<dbReference type="iPTMnet" id="Q8K4X7"/>
<dbReference type="PhosphoSitePlus" id="Q8K4X7"/>
<dbReference type="SwissPalm" id="Q8K4X7"/>
<dbReference type="PaxDb" id="10090-ENSMUSP00000024594"/>
<dbReference type="PeptideAtlas" id="Q8K4X7"/>
<dbReference type="ProteomicsDB" id="289614"/>
<dbReference type="Pumba" id="Q8K4X7"/>
<dbReference type="Antibodypedia" id="33497">
    <property type="antibodies" value="194 antibodies from 28 providers"/>
</dbReference>
<dbReference type="Ensembl" id="ENSMUST00000024594.9">
    <property type="protein sequence ID" value="ENSMUSP00000024594.3"/>
    <property type="gene ID" value="ENSMUSG00000023827.9"/>
</dbReference>
<dbReference type="GeneID" id="68262"/>
<dbReference type="KEGG" id="mmu:68262"/>
<dbReference type="UCSC" id="uc008akm.1">
    <property type="organism name" value="mouse"/>
</dbReference>
<dbReference type="AGR" id="MGI:1915512"/>
<dbReference type="CTD" id="56895"/>
<dbReference type="MGI" id="MGI:1915512">
    <property type="gene designation" value="Agpat4"/>
</dbReference>
<dbReference type="VEuPathDB" id="HostDB:ENSMUSG00000023827"/>
<dbReference type="eggNOG" id="KOG1505">
    <property type="taxonomic scope" value="Eukaryota"/>
</dbReference>
<dbReference type="GeneTree" id="ENSGT00950000182836"/>
<dbReference type="HOGENOM" id="CLU_041844_5_2_1"/>
<dbReference type="InParanoid" id="Q8K4X7"/>
<dbReference type="OMA" id="EQECSTW"/>
<dbReference type="OrthoDB" id="189226at2759"/>
<dbReference type="PhylomeDB" id="Q8K4X7"/>
<dbReference type="TreeFam" id="TF314065"/>
<dbReference type="BRENDA" id="2.3.1.51">
    <property type="organism ID" value="3474"/>
</dbReference>
<dbReference type="Reactome" id="R-MMU-1483166">
    <property type="pathway name" value="Synthesis of PA"/>
</dbReference>
<dbReference type="UniPathway" id="UPA00557">
    <property type="reaction ID" value="UER00613"/>
</dbReference>
<dbReference type="BioGRID-ORCS" id="68262">
    <property type="hits" value="2 hits in 81 CRISPR screens"/>
</dbReference>
<dbReference type="ChiTaRS" id="Agpat4">
    <property type="organism name" value="mouse"/>
</dbReference>
<dbReference type="PRO" id="PR:Q8K4X7"/>
<dbReference type="Proteomes" id="UP000000589">
    <property type="component" value="Chromosome 17"/>
</dbReference>
<dbReference type="RNAct" id="Q8K4X7">
    <property type="molecule type" value="protein"/>
</dbReference>
<dbReference type="Bgee" id="ENSMUSG00000023827">
    <property type="expression patterns" value="Expressed in aortic valve and 213 other cell types or tissues"/>
</dbReference>
<dbReference type="ExpressionAtlas" id="Q8K4X7">
    <property type="expression patterns" value="baseline and differential"/>
</dbReference>
<dbReference type="GO" id="GO:0005783">
    <property type="term" value="C:endoplasmic reticulum"/>
    <property type="evidence" value="ECO:0000314"/>
    <property type="project" value="UniProtKB"/>
</dbReference>
<dbReference type="GO" id="GO:0005789">
    <property type="term" value="C:endoplasmic reticulum membrane"/>
    <property type="evidence" value="ECO:0007669"/>
    <property type="project" value="UniProtKB-SubCell"/>
</dbReference>
<dbReference type="GO" id="GO:0005741">
    <property type="term" value="C:mitochondrial outer membrane"/>
    <property type="evidence" value="ECO:0000314"/>
    <property type="project" value="MGI"/>
</dbReference>
<dbReference type="GO" id="GO:0003841">
    <property type="term" value="F:1-acylglycerol-3-phosphate O-acyltransferase activity"/>
    <property type="evidence" value="ECO:0000314"/>
    <property type="project" value="UniProtKB"/>
</dbReference>
<dbReference type="GO" id="GO:0042171">
    <property type="term" value="F:lysophosphatidic acid acyltransferase activity"/>
    <property type="evidence" value="ECO:0000314"/>
    <property type="project" value="MGI"/>
</dbReference>
<dbReference type="GO" id="GO:0016024">
    <property type="term" value="P:CDP-diacylglycerol biosynthetic process"/>
    <property type="evidence" value="ECO:0007669"/>
    <property type="project" value="UniProtKB-UniPathway"/>
</dbReference>
<dbReference type="GO" id="GO:0006644">
    <property type="term" value="P:phospholipid metabolic process"/>
    <property type="evidence" value="ECO:0000314"/>
    <property type="project" value="MGI"/>
</dbReference>
<dbReference type="CDD" id="cd07990">
    <property type="entry name" value="LPLAT_LCLAT1-like"/>
    <property type="match status" value="1"/>
</dbReference>
<dbReference type="InterPro" id="IPR032098">
    <property type="entry name" value="Acyltransf_C"/>
</dbReference>
<dbReference type="InterPro" id="IPR002123">
    <property type="entry name" value="Plipid/glycerol_acylTrfase"/>
</dbReference>
<dbReference type="PANTHER" id="PTHR10983:SF8">
    <property type="entry name" value="1-ACYL-SN-GLYCEROL-3-PHOSPHATE ACYLTRANSFERASE DELTA"/>
    <property type="match status" value="1"/>
</dbReference>
<dbReference type="PANTHER" id="PTHR10983">
    <property type="entry name" value="1-ACYLGLYCEROL-3-PHOSPHATE ACYLTRANSFERASE-RELATED"/>
    <property type="match status" value="1"/>
</dbReference>
<dbReference type="Pfam" id="PF16076">
    <property type="entry name" value="Acyltransf_C"/>
    <property type="match status" value="1"/>
</dbReference>
<dbReference type="Pfam" id="PF01553">
    <property type="entry name" value="Acyltransferase"/>
    <property type="match status" value="1"/>
</dbReference>
<dbReference type="SMART" id="SM00563">
    <property type="entry name" value="PlsC"/>
    <property type="match status" value="1"/>
</dbReference>
<dbReference type="SUPFAM" id="SSF69593">
    <property type="entry name" value="Glycerol-3-phosphate (1)-acyltransferase"/>
    <property type="match status" value="1"/>
</dbReference>
<name>PLCD_MOUSE</name>